<name>FRDD_ECOHS</name>
<dbReference type="EMBL" id="CP000802">
    <property type="protein sequence ID" value="ABV08554.1"/>
    <property type="molecule type" value="Genomic_DNA"/>
</dbReference>
<dbReference type="RefSeq" id="WP_001299198.1">
    <property type="nucleotide sequence ID" value="NC_009800.1"/>
</dbReference>
<dbReference type="SMR" id="A8A7Q0"/>
<dbReference type="GeneID" id="93777671"/>
<dbReference type="KEGG" id="ecx:EcHS_A4395"/>
<dbReference type="HOGENOM" id="CLU_168367_0_0_6"/>
<dbReference type="GO" id="GO:0045283">
    <property type="term" value="C:fumarate reductase complex"/>
    <property type="evidence" value="ECO:0007669"/>
    <property type="project" value="UniProtKB-UniRule"/>
</dbReference>
<dbReference type="GO" id="GO:0005886">
    <property type="term" value="C:plasma membrane"/>
    <property type="evidence" value="ECO:0007669"/>
    <property type="project" value="UniProtKB-SubCell"/>
</dbReference>
<dbReference type="GO" id="GO:0000104">
    <property type="term" value="F:succinate dehydrogenase activity"/>
    <property type="evidence" value="ECO:0007669"/>
    <property type="project" value="UniProtKB-UniRule"/>
</dbReference>
<dbReference type="GO" id="GO:0006106">
    <property type="term" value="P:fumarate metabolic process"/>
    <property type="evidence" value="ECO:0007669"/>
    <property type="project" value="InterPro"/>
</dbReference>
<dbReference type="CDD" id="cd00547">
    <property type="entry name" value="QFR_TypeD_subunitD"/>
    <property type="match status" value="1"/>
</dbReference>
<dbReference type="FunFam" id="1.20.1300.10:FF:000002">
    <property type="entry name" value="Fumarate reductase subunit D"/>
    <property type="match status" value="1"/>
</dbReference>
<dbReference type="Gene3D" id="1.20.1300.10">
    <property type="entry name" value="Fumarate reductase/succinate dehydrogenase, transmembrane subunit"/>
    <property type="match status" value="1"/>
</dbReference>
<dbReference type="HAMAP" id="MF_00709">
    <property type="entry name" value="Fumarate_red_D"/>
    <property type="match status" value="1"/>
</dbReference>
<dbReference type="InterPro" id="IPR003418">
    <property type="entry name" value="Fumarate_red_D"/>
</dbReference>
<dbReference type="InterPro" id="IPR034804">
    <property type="entry name" value="SQR/QFR_C/D"/>
</dbReference>
<dbReference type="NCBIfam" id="NF003977">
    <property type="entry name" value="PRK05470.1-1"/>
    <property type="match status" value="1"/>
</dbReference>
<dbReference type="Pfam" id="PF02313">
    <property type="entry name" value="Fumarate_red_D"/>
    <property type="match status" value="1"/>
</dbReference>
<dbReference type="PIRSF" id="PIRSF000179">
    <property type="entry name" value="FrdD"/>
    <property type="match status" value="1"/>
</dbReference>
<dbReference type="SUPFAM" id="SSF81343">
    <property type="entry name" value="Fumarate reductase respiratory complex transmembrane subunits"/>
    <property type="match status" value="1"/>
</dbReference>
<proteinExistence type="inferred from homology"/>
<organism>
    <name type="scientific">Escherichia coli O9:H4 (strain HS)</name>
    <dbReference type="NCBI Taxonomy" id="331112"/>
    <lineage>
        <taxon>Bacteria</taxon>
        <taxon>Pseudomonadati</taxon>
        <taxon>Pseudomonadota</taxon>
        <taxon>Gammaproteobacteria</taxon>
        <taxon>Enterobacterales</taxon>
        <taxon>Enterobacteriaceae</taxon>
        <taxon>Escherichia</taxon>
    </lineage>
</organism>
<comment type="function">
    <text evidence="1">Two distinct, membrane-bound, FAD-containing enzymes are responsible for the catalysis of fumarate and succinate interconversion; fumarate reductase is used in anaerobic growth, and succinate dehydrogenase is used in aerobic growth. Anchors the catalytic components of the fumarate reductase complex to the cell inner membrane, binds quinones.</text>
</comment>
<comment type="subunit">
    <text evidence="1">Part of an enzyme complex containing four subunits: a flavoprotein (FrdA), an iron-sulfur protein (FrdB), and two hydrophobic anchor proteins (FrdC and FrdD).</text>
</comment>
<comment type="subcellular location">
    <subcellularLocation>
        <location evidence="1">Cell inner membrane</location>
        <topology evidence="1">Multi-pass membrane protein</topology>
    </subcellularLocation>
</comment>
<comment type="similarity">
    <text evidence="1">Belongs to the FrdD family.</text>
</comment>
<reference key="1">
    <citation type="journal article" date="2008" name="J. Bacteriol.">
        <title>The pangenome structure of Escherichia coli: comparative genomic analysis of E. coli commensal and pathogenic isolates.</title>
        <authorList>
            <person name="Rasko D.A."/>
            <person name="Rosovitz M.J."/>
            <person name="Myers G.S.A."/>
            <person name="Mongodin E.F."/>
            <person name="Fricke W.F."/>
            <person name="Gajer P."/>
            <person name="Crabtree J."/>
            <person name="Sebaihia M."/>
            <person name="Thomson N.R."/>
            <person name="Chaudhuri R."/>
            <person name="Henderson I.R."/>
            <person name="Sperandio V."/>
            <person name="Ravel J."/>
        </authorList>
    </citation>
    <scope>NUCLEOTIDE SEQUENCE [LARGE SCALE GENOMIC DNA]</scope>
    <source>
        <strain>HS</strain>
    </source>
</reference>
<sequence>MINPNPKRSDEPVFWGLFGAGGMWSAIIAPVMILLVGILLPLGLFPGDALSYERVLAFAQSFIGRVFLFLMIVLPLWCGLHRMHHAMHDLKIHVPAGKWVFYGLAAILTVVTLIGIVTI</sequence>
<feature type="chain" id="PRO_1000062069" description="Fumarate reductase subunit D">
    <location>
        <begin position="1"/>
        <end position="119"/>
    </location>
</feature>
<feature type="transmembrane region" description="Helical" evidence="1">
    <location>
        <begin position="26"/>
        <end position="46"/>
    </location>
</feature>
<feature type="transmembrane region" description="Helical" evidence="1">
    <location>
        <begin position="55"/>
        <end position="75"/>
    </location>
</feature>
<feature type="transmembrane region" description="Helical" evidence="1">
    <location>
        <begin position="99"/>
        <end position="119"/>
    </location>
</feature>
<accession>A8A7Q0</accession>
<keyword id="KW-0997">Cell inner membrane</keyword>
<keyword id="KW-1003">Cell membrane</keyword>
<keyword id="KW-0472">Membrane</keyword>
<keyword id="KW-0812">Transmembrane</keyword>
<keyword id="KW-1133">Transmembrane helix</keyword>
<evidence type="ECO:0000255" key="1">
    <source>
        <dbReference type="HAMAP-Rule" id="MF_00709"/>
    </source>
</evidence>
<gene>
    <name evidence="1" type="primary">frdD</name>
    <name type="ordered locus">EcHS_A4395</name>
</gene>
<protein>
    <recommendedName>
        <fullName evidence="1">Fumarate reductase subunit D</fullName>
    </recommendedName>
    <alternativeName>
        <fullName evidence="1">Fumarate reductase 13 kDa hydrophobic protein</fullName>
    </alternativeName>
    <alternativeName>
        <fullName evidence="1">Quinol-fumarate reductase subunit D</fullName>
        <shortName evidence="1">QFR subunit D</shortName>
    </alternativeName>
</protein>